<accession>P28976</accession>
<comment type="function">
    <text evidence="2">RNA-dependent RNA polymerase, which is responsible for the replication and transcription of the viral RNA genome. During transcription, synthesizes subgenomic RNAs and assures their capping by a cap-snatching mechanism, which involves the endonuclease activity cleaving the host capped pre-mRNAs. These short capped RNAs are then used as primers for viral transcription. The 3'-end of subgenomic mRNAs molecules are heterogeneous and not polyadenylated. The replicase function is to direct synthesis of antigenomic and genomic RNA which are encapsidated and non capped. As a consequence of the use of the same enzyme for both transcription and replication, these mechanisms need to be well coordinated.</text>
</comment>
<comment type="catalytic activity">
    <reaction evidence="6">
        <text>RNA(n) + a ribonucleoside 5'-triphosphate = RNA(n+1) + diphosphate</text>
        <dbReference type="Rhea" id="RHEA:21248"/>
        <dbReference type="Rhea" id="RHEA-COMP:14527"/>
        <dbReference type="Rhea" id="RHEA-COMP:17342"/>
        <dbReference type="ChEBI" id="CHEBI:33019"/>
        <dbReference type="ChEBI" id="CHEBI:61557"/>
        <dbReference type="ChEBI" id="CHEBI:140395"/>
        <dbReference type="EC" id="2.7.7.48"/>
    </reaction>
</comment>
<comment type="cofactor">
    <cofactor evidence="5">
        <name>Mn(2+)</name>
        <dbReference type="ChEBI" id="CHEBI:29035"/>
    </cofactor>
    <text evidence="5">For endonuclease activity. Binds 2 Mn(2+) ions in the active site. The divalent metal ions are crucial for catalytic activity.</text>
</comment>
<comment type="cofactor">
    <cofactor evidence="3">
        <name>Mg(2+)</name>
        <dbReference type="ChEBI" id="CHEBI:18420"/>
    </cofactor>
    <cofactor evidence="3">
        <name>Mn(2+)</name>
        <dbReference type="ChEBI" id="CHEBI:29035"/>
    </cofactor>
    <text evidence="3">For polymerase activity.</text>
</comment>
<comment type="subunit">
    <text evidence="4">Homomultimer; the oligomeric structure is essential for the polymerase activity. Interacts with nucleoprotein N.</text>
</comment>
<comment type="subcellular location">
    <subcellularLocation>
        <location evidence="3">Virion</location>
    </subcellularLocation>
    <subcellularLocation>
        <location evidence="3">Host cytoplasm</location>
    </subcellularLocation>
</comment>
<comment type="domain">
    <text evidence="2">The N-terminus contains the endonuclease activity (endoN). The central region contains the RdRp activity.</text>
</comment>
<comment type="miscellaneous">
    <text evidence="7">Classified as His(+) endonuclease since it has a histidine upstream of the active site that coordinates the first cation.</text>
</comment>
<comment type="similarity">
    <text evidence="7">Belongs to the Bunyavirales RNA polymerase family.</text>
</comment>
<sequence length="2875" mass="331503">MNIQKIQKLIENGTTLLLSIEDCVGSNHDLALDLHKRNSDEIPEDVIINNNAKNYETMRELIVKITADGEGLNKGMATVDVKKLSEMVSLFEQKYLETELARHDIFGELISRHLRIKPKQRNEVEIEHALREYLDELNKKSCINKLSDDEFERINKEYVATNATPDNYVIYKESKNSELCLIIYDWKISVDARTETKQWRNTYKNIWKSFKDIKVNGKPFLEEHPVFVSIVILKPIAGMPITVTSSRVLEKFEDSPSALHGERIKHAKNAKLLNISYVGQIVGTTPTVVRNYYANTQRIKSEVRGILGDDFGSKDVFFSHWTSKYKERNPTEIAYSEDIERIIDSLVTDEIPREEIIHFLFGNFCFHIETMNDQHIADKFKGYQNSCINLKIEPKADLADLKDHLIQKQQIWESLYGKHLEKIMLRIREKKRKEKEIPDITTAFNQNAAEYEERYPNCFNDLSELKLTFHDLVPSLKIELSSEVDYNNAIINKFRESFKSSSRVIYNSPYSSINNQTNKARDITNLVRLCLAELSCDTTKMEKQELEDEIDINTGSIKVERTKKSKEWNKQGSCLTRNKNEFCMKDTGRENKTTYFKGLAVMNIGMSSKKRILKKEEIKERISKGLEYDTSERQADPNDDYSSIDMSSLTHMKKLIRHDNDDSLSGKRFKGSFFLLHNFNIIEDGKITSVFNNYAKNPECLYIQDSVLKTELETCKKINKLCNDLAIYHYSEDMMQFSKGLMVADRYMTKESFKILTTANTSMMLLAFKGDGMNTGGSGVPYIALHIVDEDMSDHFNICYTKEIYSYFRSGSNYIYIMRPQRLNQVRLLRLFKTPSKVPVCFPQFSKKANEIGKSLKNKDIEKVNLFSMTMTVKQILINIVFSSVMIGTVTKLSRMGIFDFMRYAGFLRLSDYSNIKEYIRDKSDPDITNCGRYLFRNGIKKLLFRMEDLNLSTNAKPVVVDHENDIIGGITNLNIKCPITGSTLLTLEDLYNNVYLAIYMMPKSLHNHVHNLTSLLNLPAEWELKFRKELGFNIFEDIYPKKAMFDDKDLFSINGALNVKALSDYYLGNIENVGLMRSEIENKEDFLSPCYKISTLKSSKKCSQSNIISTDEIIECLQDAKIQDIENWKGNNLAIIKGLIRTYNEEKNRLVEFFEDNCVNSLYLIEKLKEIISSGSITVGKSVTSKFIRNNHPLTVETYLKTKLYYRNNVTVLKSKKVSEELYDLVKQFHDMMEIDLDSVMNLGKGTEGKKLTFLQMLEFVMSKAKNVTGSVDFLVSVFEKMQRTKTDREIYLMSMKVKMMLYFIEHTFKHVAQSDPSEAISISGDNKIRALSTLSLDTITSYNDILNKNSKKSRLAFLSADQSKWSASGLTTYKYVLAIILNPILTTGEASLMIECILMYVKLKKVCIPTDIFLNLRKAQQTFGENETAIGLLTKGLTTNTYPVSMNWLQGNLNYLSSVYHSCAMKAYHNTLECYKNCDFQTRWIVHSDDNATSLIASGEVDKMLTDFSSSSLPEMLFRSIEAHFKSFCITLNPKKSYASSSEVEFISERISKWSDYSSLLQAFSKLLHRIFAYKLFDDLMSLSIHVTMLLRKGCPNEVIPFAYGAVQVQALSIYSMLPGEVNDSIRIFNKLGVSLKSNEIPTNMGGWLTSPIEPLSILGPSSNDQIIYYNVIRDFLNKKSLEEVKDSVSSSSYLQMRFRELKEKYERGTLEEKDKKMIFLINLFEKASVSEDSDVLTIGMKFQTMLTQIIKLPNFINENALNKMSSYKDFSKLYPNLKKNEDLYKSTKNLKIDEDAVLEEDELYKKIASSLEMESVHDIMIKNPETILIAPLNDRDFLLSQLFMYTSPSKRNQLSNQSTEKLALDRVLRSKARTFVNISSTVKMTYEENMEKKILEMLKFDLDSYCSFKTCVNLVIKDVNFSMLIPILDSAYPCESRKRDNYNFRWFQTERWIPVVEGSPGLVVMHAVYGSNYIENLGLKNIPLTDDSINVLTSTFGTGLIMEDVKSLVNGKDSFETEAFSNSNECQRLVKACNYMIAAQNRLLAINTCFTRKSFPFYSKFNLGRGFISNTLALLSTIYSKEESYHFVSTASYKLDKTIRTVVSAQQDMNLEKILDTAVYISDKLQSLFPTITREDIVLILQNVCLDSKPIWQSLEDKMKKINNSTASGFTVSNVILSHNSELNTIQKQIVWMWNMGLCSHRTLDFVIRYIRRRDVRYVKTEEQDESGNYVSGTMYKIGIMTRSCYVELIASDQDVAVSLRTPFEILNEREYLFDTYRESIEKLLAEIMFDKVNIINQTTTDCFLRTRRSCIRMTTDNKMIVKVNATSRQIRLENVKLVVKIKYENVNSDVWDIIESQKSLVLRLPEVGEFFSDMYKTADSETETIKTIKNRLMTSLTFIEAFGNLSQQIKEIVDDDIRETMDEFLMNIRDTCLEGLENCKSVEEYDSYLDENGFNDTVELFENLLRTHDNFENEYSPLFSEIVDKAKQYTRDLEGFKEILLMLKYSLINDASGFKSYRATGMHAVELMAKKHIEIGEFNLLGMIQLIKACETCHNNDSILNLASLRNVLSRTYATFGRRIRLDHDLDLQNNLMEKSYDFKTLVLPEIKLSELSREILKENGFVISGENLKMDRSDEEFVGLASFNVLRLDEEEMYEGLIKEMKIKRKKKGFLFPANTLLLSELIKFLIGGIKGTSFDIETLLRNSFRPDIFSTDRLGRLSSSVPALKVYATVYMEYKNVNCPLNEIADSLEGYLKLTKSRSKEHFLSGRVKKALIQLRDEQSRTKKLEVYKDIANFLARHPLCLSEKTLYGRYTYSDINDYIMQTREIILSKISELDEVVETDEDNFLLSYLRGEEDAFDEDELDEEEDTD</sequence>
<reference key="1">
    <citation type="journal article" date="1991" name="J. Gen. Virol.">
        <title>Tomato spotted wilt virus L RNA encodes a putative RNA polymerase.</title>
        <authorList>
            <person name="de Haan P."/>
            <person name="Kormelink R."/>
            <person name="de Oliveira Resende R."/>
            <person name="van Poelwijk F."/>
            <person name="Peters D."/>
            <person name="Goldbach R."/>
        </authorList>
    </citation>
    <scope>NUCLEOTIDE SEQUENCE [GENOMIC RNA]</scope>
</reference>
<reference key="2">
    <citation type="journal article" date="2017" name="Crit. Rev. Microbiol.">
        <title>Bunyaviridae RdRps: structure, motifs, and RNA synthesis machinery.</title>
        <authorList>
            <person name="Amroun A."/>
            <person name="Priet S."/>
            <person name="de Lamballerie X."/>
            <person name="Querat G."/>
        </authorList>
    </citation>
    <scope>REVIEW</scope>
</reference>
<protein>
    <recommendedName>
        <fullName>RNA-directed RNA polymerase L</fullName>
        <shortName>Protein L</shortName>
        <ecNumber evidence="1">2.7.7.48</ecNumber>
    </recommendedName>
    <alternativeName>
        <fullName>Large structural protein</fullName>
    </alternativeName>
    <alternativeName>
        <fullName>Replicase</fullName>
    </alternativeName>
    <alternativeName>
        <fullName>Transcriptase</fullName>
    </alternativeName>
    <domain>
        <recommendedName>
            <fullName>cap-snatching endonuclease</fullName>
            <ecNumber evidence="5">3.1.-.-</ecNumber>
        </recommendedName>
    </domain>
</protein>
<dbReference type="EC" id="2.7.7.48" evidence="1"/>
<dbReference type="EC" id="3.1.-.-" evidence="5"/>
<dbReference type="EMBL" id="D10066">
    <property type="protein sequence ID" value="BAA00955.1"/>
    <property type="molecule type" value="Genomic_RNA"/>
</dbReference>
<dbReference type="PIR" id="JQ1335">
    <property type="entry name" value="RRVUTW"/>
</dbReference>
<dbReference type="SMR" id="P28976"/>
<dbReference type="KEGG" id="vg:956582"/>
<dbReference type="Proteomes" id="UP000006674">
    <property type="component" value="Genome"/>
</dbReference>
<dbReference type="GO" id="GO:0030430">
    <property type="term" value="C:host cell cytoplasm"/>
    <property type="evidence" value="ECO:0007669"/>
    <property type="project" value="UniProtKB-SubCell"/>
</dbReference>
<dbReference type="GO" id="GO:0044423">
    <property type="term" value="C:virion component"/>
    <property type="evidence" value="ECO:0007669"/>
    <property type="project" value="UniProtKB-KW"/>
</dbReference>
<dbReference type="GO" id="GO:0016787">
    <property type="term" value="F:hydrolase activity"/>
    <property type="evidence" value="ECO:0007669"/>
    <property type="project" value="UniProtKB-KW"/>
</dbReference>
<dbReference type="GO" id="GO:0046872">
    <property type="term" value="F:metal ion binding"/>
    <property type="evidence" value="ECO:0007669"/>
    <property type="project" value="UniProtKB-KW"/>
</dbReference>
<dbReference type="GO" id="GO:0000166">
    <property type="term" value="F:nucleotide binding"/>
    <property type="evidence" value="ECO:0007669"/>
    <property type="project" value="UniProtKB-KW"/>
</dbReference>
<dbReference type="GO" id="GO:0003968">
    <property type="term" value="F:RNA-directed RNA polymerase activity"/>
    <property type="evidence" value="ECO:0007669"/>
    <property type="project" value="UniProtKB-KW"/>
</dbReference>
<dbReference type="GO" id="GO:0006351">
    <property type="term" value="P:DNA-templated transcription"/>
    <property type="evidence" value="ECO:0007669"/>
    <property type="project" value="InterPro"/>
</dbReference>
<dbReference type="GO" id="GO:0039689">
    <property type="term" value="P:negative stranded viral RNA replication"/>
    <property type="evidence" value="ECO:0000250"/>
    <property type="project" value="UniProtKB"/>
</dbReference>
<dbReference type="GO" id="GO:0039696">
    <property type="term" value="P:RNA-templated viral transcription"/>
    <property type="evidence" value="ECO:0000250"/>
    <property type="project" value="UniProtKB"/>
</dbReference>
<dbReference type="Gene3D" id="3.40.91.60">
    <property type="match status" value="1"/>
</dbReference>
<dbReference type="InterPro" id="IPR007099">
    <property type="entry name" value="RNA-dir_pol_NSvirus"/>
</dbReference>
<dbReference type="InterPro" id="IPR015841">
    <property type="entry name" value="RNA-dir_pol_tospovirus"/>
</dbReference>
<dbReference type="InterPro" id="IPR007322">
    <property type="entry name" value="RNA_pol_bunyavir"/>
</dbReference>
<dbReference type="Pfam" id="PF04196">
    <property type="entry name" value="Bunya_RdRp"/>
    <property type="match status" value="1"/>
</dbReference>
<dbReference type="PIRSF" id="PIRSF036872">
    <property type="entry name" value="L_TospoV"/>
    <property type="match status" value="1"/>
</dbReference>
<dbReference type="PROSITE" id="PS50525">
    <property type="entry name" value="RDRP_SSRNA_NEG_SEG"/>
    <property type="match status" value="1"/>
</dbReference>
<organismHost>
    <name type="scientific">Frankliniella occidentalis</name>
    <name type="common">Western flower thrips</name>
    <name type="synonym">Euthrips occidentalis</name>
    <dbReference type="NCBI Taxonomy" id="133901"/>
</organismHost>
<organismHost>
    <name type="scientific">Scirtothrips dorsalis</name>
    <name type="common">Chilli thrips</name>
    <dbReference type="NCBI Taxonomy" id="163899"/>
</organismHost>
<organismHost>
    <name type="scientific">Solanum lycopersicum</name>
    <name type="common">Tomato</name>
    <name type="synonym">Lycopersicon esculentum</name>
    <dbReference type="NCBI Taxonomy" id="4081"/>
</organismHost>
<organismHost>
    <name type="scientific">Thrips tabaci</name>
    <dbReference type="NCBI Taxonomy" id="161014"/>
</organismHost>
<name>L_TSWV1</name>
<proteinExistence type="inferred from homology"/>
<keyword id="KW-1035">Host cytoplasm</keyword>
<keyword id="KW-0378">Hydrolase</keyword>
<keyword id="KW-0460">Magnesium</keyword>
<keyword id="KW-0479">Metal-binding</keyword>
<keyword id="KW-0547">Nucleotide-binding</keyword>
<keyword id="KW-0548">Nucleotidyltransferase</keyword>
<keyword id="KW-1185">Reference proteome</keyword>
<keyword id="KW-0696">RNA-directed RNA polymerase</keyword>
<keyword id="KW-0808">Transferase</keyword>
<keyword id="KW-0693">Viral RNA replication</keyword>
<keyword id="KW-0946">Virion</keyword>
<evidence type="ECO:0000250" key="1">
    <source>
        <dbReference type="UniProtKB" id="I0DF35"/>
    </source>
</evidence>
<evidence type="ECO:0000250" key="2">
    <source>
        <dbReference type="UniProtKB" id="P14240"/>
    </source>
</evidence>
<evidence type="ECO:0000250" key="3">
    <source>
        <dbReference type="UniProtKB" id="P14241"/>
    </source>
</evidence>
<evidence type="ECO:0000250" key="4">
    <source>
        <dbReference type="UniProtKB" id="P27316"/>
    </source>
</evidence>
<evidence type="ECO:0000250" key="5">
    <source>
        <dbReference type="UniProtKB" id="Q6GWS6"/>
    </source>
</evidence>
<evidence type="ECO:0000255" key="6">
    <source>
        <dbReference type="PROSITE-ProRule" id="PRU00539"/>
    </source>
</evidence>
<evidence type="ECO:0000305" key="7"/>
<feature type="chain" id="PRO_0000222027" description="RNA-directed RNA polymerase L">
    <location>
        <begin position="1"/>
        <end position="2875"/>
    </location>
</feature>
<feature type="domain" description="RdRp catalytic" evidence="6">
    <location>
        <begin position="1347"/>
        <end position="1530"/>
    </location>
</feature>
<feature type="region of interest" description="Endonuclease" evidence="5">
    <location>
        <begin position="96"/>
        <end position="236"/>
    </location>
</feature>
<feature type="binding site" evidence="5">
    <location>
        <position position="103"/>
    </location>
    <ligand>
        <name>Mn(2+)</name>
        <dbReference type="ChEBI" id="CHEBI:29035"/>
        <label>1</label>
    </ligand>
</feature>
<feature type="binding site" evidence="5">
    <location>
        <position position="166"/>
    </location>
    <ligand>
        <name>Mn(2+)</name>
        <dbReference type="ChEBI" id="CHEBI:29035"/>
        <label>1</label>
    </ligand>
</feature>
<feature type="binding site" evidence="5">
    <location>
        <position position="166"/>
    </location>
    <ligand>
        <name>Mn(2+)</name>
        <dbReference type="ChEBI" id="CHEBI:29035"/>
        <label>2</label>
    </ligand>
</feature>
<feature type="binding site" evidence="5">
    <location>
        <position position="185"/>
    </location>
    <ligand>
        <name>Mn(2+)</name>
        <dbReference type="ChEBI" id="CHEBI:29035"/>
        <label>1</label>
    </ligand>
</feature>
<feature type="binding site" evidence="1">
    <location>
        <position position="1492"/>
    </location>
    <ligand>
        <name>Mg(2+)</name>
        <dbReference type="ChEBI" id="CHEBI:18420"/>
        <note>catalytic; for RdRp activity</note>
    </ligand>
</feature>
<gene>
    <name type="primary">L</name>
</gene>
<organism>
    <name type="scientific">Tomato spotted wilt virus (strain Brazilian Br-01)</name>
    <name type="common">TSWV</name>
    <dbReference type="NCBI Taxonomy" id="36413"/>
    <lineage>
        <taxon>Viruses</taxon>
        <taxon>Riboviria</taxon>
        <taxon>Orthornavirae</taxon>
        <taxon>Negarnaviricota</taxon>
        <taxon>Polyploviricotina</taxon>
        <taxon>Ellioviricetes</taxon>
        <taxon>Bunyavirales</taxon>
        <taxon>Tospoviridae</taxon>
        <taxon>Orthotospovirus</taxon>
        <taxon>Tomato spotted wilt virus</taxon>
    </lineage>
</organism>